<feature type="signal peptide" evidence="1">
    <location>
        <begin position="1"/>
        <end position="31"/>
    </location>
</feature>
<feature type="chain" id="PRO_0000363830" description="Probable siderophore transport system permease protein YfiZ">
    <location>
        <begin position="32"/>
        <end position="333"/>
    </location>
</feature>
<feature type="transmembrane region" description="Helical" evidence="1">
    <location>
        <begin position="64"/>
        <end position="84"/>
    </location>
</feature>
<feature type="transmembrane region" description="Helical" evidence="1">
    <location>
        <begin position="94"/>
        <end position="114"/>
    </location>
</feature>
<feature type="transmembrane region" description="Helical" evidence="1">
    <location>
        <begin position="119"/>
        <end position="139"/>
    </location>
</feature>
<feature type="transmembrane region" description="Helical" evidence="1">
    <location>
        <begin position="152"/>
        <end position="172"/>
    </location>
</feature>
<feature type="transmembrane region" description="Helical" evidence="1">
    <location>
        <begin position="193"/>
        <end position="213"/>
    </location>
</feature>
<feature type="transmembrane region" description="Helical" evidence="1">
    <location>
        <begin position="246"/>
        <end position="266"/>
    </location>
</feature>
<feature type="transmembrane region" description="Helical" evidence="1">
    <location>
        <begin position="280"/>
        <end position="300"/>
    </location>
</feature>
<feature type="transmembrane region" description="Helical" evidence="1">
    <location>
        <begin position="303"/>
        <end position="323"/>
    </location>
</feature>
<reference key="1">
    <citation type="journal article" date="1996" name="DNA Res.">
        <title>Cloning and sequencing of a 27.8-kb nucleotide sequence of the 79 degrees-81 degrees region of the Bacillus subtilis genome containing the sspE locus.</title>
        <authorList>
            <person name="Yamamoto H."/>
            <person name="Uchiyama S."/>
            <person name="Sekiguchi J."/>
        </authorList>
    </citation>
    <scope>NUCLEOTIDE SEQUENCE [GENOMIC DNA]</scope>
    <source>
        <strain>168</strain>
    </source>
</reference>
<reference key="2">
    <citation type="journal article" date="1997" name="Nature">
        <title>The complete genome sequence of the Gram-positive bacterium Bacillus subtilis.</title>
        <authorList>
            <person name="Kunst F."/>
            <person name="Ogasawara N."/>
            <person name="Moszer I."/>
            <person name="Albertini A.M."/>
            <person name="Alloni G."/>
            <person name="Azevedo V."/>
            <person name="Bertero M.G."/>
            <person name="Bessieres P."/>
            <person name="Bolotin A."/>
            <person name="Borchert S."/>
            <person name="Borriss R."/>
            <person name="Boursier L."/>
            <person name="Brans A."/>
            <person name="Braun M."/>
            <person name="Brignell S.C."/>
            <person name="Bron S."/>
            <person name="Brouillet S."/>
            <person name="Bruschi C.V."/>
            <person name="Caldwell B."/>
            <person name="Capuano V."/>
            <person name="Carter N.M."/>
            <person name="Choi S.-K."/>
            <person name="Codani J.-J."/>
            <person name="Connerton I.F."/>
            <person name="Cummings N.J."/>
            <person name="Daniel R.A."/>
            <person name="Denizot F."/>
            <person name="Devine K.M."/>
            <person name="Duesterhoeft A."/>
            <person name="Ehrlich S.D."/>
            <person name="Emmerson P.T."/>
            <person name="Entian K.-D."/>
            <person name="Errington J."/>
            <person name="Fabret C."/>
            <person name="Ferrari E."/>
            <person name="Foulger D."/>
            <person name="Fritz C."/>
            <person name="Fujita M."/>
            <person name="Fujita Y."/>
            <person name="Fuma S."/>
            <person name="Galizzi A."/>
            <person name="Galleron N."/>
            <person name="Ghim S.-Y."/>
            <person name="Glaser P."/>
            <person name="Goffeau A."/>
            <person name="Golightly E.J."/>
            <person name="Grandi G."/>
            <person name="Guiseppi G."/>
            <person name="Guy B.J."/>
            <person name="Haga K."/>
            <person name="Haiech J."/>
            <person name="Harwood C.R."/>
            <person name="Henaut A."/>
            <person name="Hilbert H."/>
            <person name="Holsappel S."/>
            <person name="Hosono S."/>
            <person name="Hullo M.-F."/>
            <person name="Itaya M."/>
            <person name="Jones L.-M."/>
            <person name="Joris B."/>
            <person name="Karamata D."/>
            <person name="Kasahara Y."/>
            <person name="Klaerr-Blanchard M."/>
            <person name="Klein C."/>
            <person name="Kobayashi Y."/>
            <person name="Koetter P."/>
            <person name="Koningstein G."/>
            <person name="Krogh S."/>
            <person name="Kumano M."/>
            <person name="Kurita K."/>
            <person name="Lapidus A."/>
            <person name="Lardinois S."/>
            <person name="Lauber J."/>
            <person name="Lazarevic V."/>
            <person name="Lee S.-M."/>
            <person name="Levine A."/>
            <person name="Liu H."/>
            <person name="Masuda S."/>
            <person name="Mauel C."/>
            <person name="Medigue C."/>
            <person name="Medina N."/>
            <person name="Mellado R.P."/>
            <person name="Mizuno M."/>
            <person name="Moestl D."/>
            <person name="Nakai S."/>
            <person name="Noback M."/>
            <person name="Noone D."/>
            <person name="O'Reilly M."/>
            <person name="Ogawa K."/>
            <person name="Ogiwara A."/>
            <person name="Oudega B."/>
            <person name="Park S.-H."/>
            <person name="Parro V."/>
            <person name="Pohl T.M."/>
            <person name="Portetelle D."/>
            <person name="Porwollik S."/>
            <person name="Prescott A.M."/>
            <person name="Presecan E."/>
            <person name="Pujic P."/>
            <person name="Purnelle B."/>
            <person name="Rapoport G."/>
            <person name="Rey M."/>
            <person name="Reynolds S."/>
            <person name="Rieger M."/>
            <person name="Rivolta C."/>
            <person name="Rocha E."/>
            <person name="Roche B."/>
            <person name="Rose M."/>
            <person name="Sadaie Y."/>
            <person name="Sato T."/>
            <person name="Scanlan E."/>
            <person name="Schleich S."/>
            <person name="Schroeter R."/>
            <person name="Scoffone F."/>
            <person name="Sekiguchi J."/>
            <person name="Sekowska A."/>
            <person name="Seror S.J."/>
            <person name="Serror P."/>
            <person name="Shin B.-S."/>
            <person name="Soldo B."/>
            <person name="Sorokin A."/>
            <person name="Tacconi E."/>
            <person name="Takagi T."/>
            <person name="Takahashi H."/>
            <person name="Takemaru K."/>
            <person name="Takeuchi M."/>
            <person name="Tamakoshi A."/>
            <person name="Tanaka T."/>
            <person name="Terpstra P."/>
            <person name="Tognoni A."/>
            <person name="Tosato V."/>
            <person name="Uchiyama S."/>
            <person name="Vandenbol M."/>
            <person name="Vannier F."/>
            <person name="Vassarotti A."/>
            <person name="Viari A."/>
            <person name="Wambutt R."/>
            <person name="Wedler E."/>
            <person name="Wedler H."/>
            <person name="Weitzenegger T."/>
            <person name="Winters P."/>
            <person name="Wipat A."/>
            <person name="Yamamoto H."/>
            <person name="Yamane K."/>
            <person name="Yasumoto K."/>
            <person name="Yata K."/>
            <person name="Yoshida K."/>
            <person name="Yoshikawa H.-F."/>
            <person name="Zumstein E."/>
            <person name="Yoshikawa H."/>
            <person name="Danchin A."/>
        </authorList>
    </citation>
    <scope>NUCLEOTIDE SEQUENCE [LARGE SCALE GENOMIC DNA]</scope>
    <source>
        <strain>168</strain>
    </source>
</reference>
<reference key="3">
    <citation type="journal article" date="2002" name="Mol. Microbiol.">
        <title>Global analysis of the Bacillus subtilis Fur regulon and the iron starvation stimulon.</title>
        <authorList>
            <person name="Baichoo N."/>
            <person name="Wang T."/>
            <person name="Ye R."/>
            <person name="Helmann J.D."/>
        </authorList>
    </citation>
    <scope>INDUCTION</scope>
    <source>
        <strain>168</strain>
    </source>
</reference>
<reference key="4">
    <citation type="journal article" date="2006" name="J. Bacteriol.">
        <title>Role of the Fur regulon in iron transport in Bacillus subtilis.</title>
        <authorList>
            <person name="Ollinger J."/>
            <person name="Song K.-B."/>
            <person name="Antelmann H."/>
            <person name="Hecker M."/>
            <person name="Helmann J.D."/>
        </authorList>
    </citation>
    <scope>FUNCTION</scope>
    <scope>POSSIBLE SUBUNIT</scope>
    <scope>DISRUPTION PHENOTYPE</scope>
    <scope>INDUCTION</scope>
    <source>
        <strain>168</strain>
    </source>
</reference>
<proteinExistence type="evidence at protein level"/>
<dbReference type="EMBL" id="D85082">
    <property type="protein sequence ID" value="BAA24466.1"/>
    <property type="molecule type" value="Genomic_DNA"/>
</dbReference>
<dbReference type="EMBL" id="AL009126">
    <property type="protein sequence ID" value="CAB12674.1"/>
    <property type="molecule type" value="Genomic_DNA"/>
</dbReference>
<dbReference type="PIR" id="D69805">
    <property type="entry name" value="D69805"/>
</dbReference>
<dbReference type="RefSeq" id="WP_003242478.1">
    <property type="nucleotide sequence ID" value="NZ_OZ025638.1"/>
</dbReference>
<dbReference type="SMR" id="O31568"/>
<dbReference type="FunCoup" id="O31568">
    <property type="interactions" value="47"/>
</dbReference>
<dbReference type="STRING" id="224308.BSU08450"/>
<dbReference type="PaxDb" id="224308-BSU08450"/>
<dbReference type="EnsemblBacteria" id="CAB12674">
    <property type="protein sequence ID" value="CAB12674"/>
    <property type="gene ID" value="BSU_08450"/>
</dbReference>
<dbReference type="GeneID" id="936179"/>
<dbReference type="KEGG" id="bsu:BSU08450"/>
<dbReference type="PATRIC" id="fig|224308.179.peg.912"/>
<dbReference type="eggNOG" id="COG0609">
    <property type="taxonomic scope" value="Bacteria"/>
</dbReference>
<dbReference type="InParanoid" id="O31568"/>
<dbReference type="OrthoDB" id="9811721at2"/>
<dbReference type="PhylomeDB" id="O31568"/>
<dbReference type="BioCyc" id="BSUB:BSU08450-MONOMER"/>
<dbReference type="Proteomes" id="UP000001570">
    <property type="component" value="Chromosome"/>
</dbReference>
<dbReference type="GO" id="GO:0005886">
    <property type="term" value="C:plasma membrane"/>
    <property type="evidence" value="ECO:0000318"/>
    <property type="project" value="GO_Central"/>
</dbReference>
<dbReference type="GO" id="GO:0022857">
    <property type="term" value="F:transmembrane transporter activity"/>
    <property type="evidence" value="ECO:0000318"/>
    <property type="project" value="GO_Central"/>
</dbReference>
<dbReference type="GO" id="GO:0033214">
    <property type="term" value="P:siderophore-dependent iron import into cell"/>
    <property type="evidence" value="ECO:0000318"/>
    <property type="project" value="GO_Central"/>
</dbReference>
<dbReference type="CDD" id="cd06550">
    <property type="entry name" value="TM_ABC_iron-siderophores_like"/>
    <property type="match status" value="1"/>
</dbReference>
<dbReference type="FunFam" id="1.10.3470.10:FF:000001">
    <property type="entry name" value="Vitamin B12 ABC transporter permease BtuC"/>
    <property type="match status" value="1"/>
</dbReference>
<dbReference type="Gene3D" id="1.10.3470.10">
    <property type="entry name" value="ABC transporter involved in vitamin B12 uptake, BtuC"/>
    <property type="match status" value="1"/>
</dbReference>
<dbReference type="InterPro" id="IPR037294">
    <property type="entry name" value="ABC_BtuC-like"/>
</dbReference>
<dbReference type="InterPro" id="IPR000522">
    <property type="entry name" value="ABC_transptr_permease_BtuC"/>
</dbReference>
<dbReference type="PANTHER" id="PTHR30472">
    <property type="entry name" value="FERRIC ENTEROBACTIN TRANSPORT SYSTEM PERMEASE PROTEIN"/>
    <property type="match status" value="1"/>
</dbReference>
<dbReference type="PANTHER" id="PTHR30472:SF65">
    <property type="entry name" value="SIDEROPHORE TRANSPORT SYSTEM PERMEASE PROTEIN YFIZ-RELATED"/>
    <property type="match status" value="1"/>
</dbReference>
<dbReference type="Pfam" id="PF01032">
    <property type="entry name" value="FecCD"/>
    <property type="match status" value="1"/>
</dbReference>
<dbReference type="SUPFAM" id="SSF81345">
    <property type="entry name" value="ABC transporter involved in vitamin B12 uptake, BtuC"/>
    <property type="match status" value="1"/>
</dbReference>
<gene>
    <name type="primary">yfiZ</name>
    <name type="ordered locus">BSU08450</name>
</gene>
<comment type="function">
    <text evidence="5">Part of the ABC transporter complex YfiYZ/YfhA/YusV involved in import of the iron-hydroxamate siderophores schizokinen, arthrobactin and corprogen.</text>
</comment>
<comment type="subunit">
    <text evidence="4">The complex is composed of one ATP-binding protein (YusV), two transmembrane proteins (YfiZ and YfhA) and a solute-binding protein (YfiY).</text>
</comment>
<comment type="subcellular location">
    <subcellularLocation>
        <location evidence="4">Cell membrane</location>
        <topology evidence="4">Multi-pass membrane protein</topology>
    </subcellularLocation>
</comment>
<comment type="induction">
    <text evidence="2 3">Induced by iron starvation, repressed by fur.</text>
</comment>
<comment type="disruption phenotype">
    <text evidence="3">Strains lacking this gene show a reduction in growth stimulation by the iron-hydroxamate siderophores schizokinen and arthrobactin compared to wild-type.</text>
</comment>
<comment type="similarity">
    <text evidence="4">Belongs to the binding-protein-dependent transport system permease family. FecCD subfamily.</text>
</comment>
<keyword id="KW-1003">Cell membrane</keyword>
<keyword id="KW-0406">Ion transport</keyword>
<keyword id="KW-0408">Iron</keyword>
<keyword id="KW-0410">Iron transport</keyword>
<keyword id="KW-0472">Membrane</keyword>
<keyword id="KW-1185">Reference proteome</keyword>
<keyword id="KW-0732">Signal</keyword>
<keyword id="KW-0812">Transmembrane</keyword>
<keyword id="KW-1133">Transmembrane helix</keyword>
<keyword id="KW-0813">Transport</keyword>
<protein>
    <recommendedName>
        <fullName>Probable siderophore transport system permease protein YfiZ</fullName>
    </recommendedName>
</protein>
<name>YFIZ_BACSU</name>
<accession>O31568</accession>
<accession>Q79EW2</accession>
<organism>
    <name type="scientific">Bacillus subtilis (strain 168)</name>
    <dbReference type="NCBI Taxonomy" id="224308"/>
    <lineage>
        <taxon>Bacteria</taxon>
        <taxon>Bacillati</taxon>
        <taxon>Bacillota</taxon>
        <taxon>Bacilli</taxon>
        <taxon>Bacillales</taxon>
        <taxon>Bacillaceae</taxon>
        <taxon>Bacillus</taxon>
    </lineage>
</organism>
<evidence type="ECO:0000255" key="1"/>
<evidence type="ECO:0000269" key="2">
    <source>
    </source>
</evidence>
<evidence type="ECO:0000269" key="3">
    <source>
    </source>
</evidence>
<evidence type="ECO:0000305" key="4"/>
<evidence type="ECO:0000305" key="5">
    <source>
    </source>
</evidence>
<sequence>MICKKASSKWIVLVCLIFILLTAVCASVVYGYTGTSWRQVYQAFTSFNGTNEHVIIKDVRLPRALVATVVGASLAAAGALMQALTKNPLASPGIFGINAGAGFFIVAGSFFLHIQSPQALVWSSFLGAAFTAAIVYAAGSLGREGLTPIKLTLAGAAMAAMFSSLTQGLLSVNELELAQVLFWLTGSVQGRSLDLLMTMFPYAAAALVICFFLGQKINLLVMGEDVAKGLGQKTGLLKFVMALCVVMLAGSAVAIAGPISFIGIIIPHFARFVVGNDYRWVLPFSAVLGAILLVCADIGARYIIMPQEVPVGVMTAIIGMPVFVYIARRGAKL</sequence>